<reference key="1">
    <citation type="journal article" date="2005" name="Genome Res.">
        <title>Living with two extremes: conclusions from the genome sequence of Natronomonas pharaonis.</title>
        <authorList>
            <person name="Falb M."/>
            <person name="Pfeiffer F."/>
            <person name="Palm P."/>
            <person name="Rodewald K."/>
            <person name="Hickmann V."/>
            <person name="Tittor J."/>
            <person name="Oesterhelt D."/>
        </authorList>
    </citation>
    <scope>NUCLEOTIDE SEQUENCE [LARGE SCALE GENOMIC DNA]</scope>
    <source>
        <strain>ATCC 35678 / DSM 2160 / CIP 103997 / JCM 8858 / NBRC 14720 / NCIMB 2260 / Gabara</strain>
    </source>
</reference>
<keyword id="KW-1185">Reference proteome</keyword>
<keyword id="KW-0687">Ribonucleoprotein</keyword>
<keyword id="KW-0689">Ribosomal protein</keyword>
<organism>
    <name type="scientific">Natronomonas pharaonis (strain ATCC 35678 / DSM 2160 / CIP 103997 / JCM 8858 / NBRC 14720 / NCIMB 2260 / Gabara)</name>
    <name type="common">Halobacterium pharaonis</name>
    <dbReference type="NCBI Taxonomy" id="348780"/>
    <lineage>
        <taxon>Archaea</taxon>
        <taxon>Methanobacteriati</taxon>
        <taxon>Methanobacteriota</taxon>
        <taxon>Stenosarchaea group</taxon>
        <taxon>Halobacteria</taxon>
        <taxon>Halobacteriales</taxon>
        <taxon>Haloarculaceae</taxon>
        <taxon>Natronomonas</taxon>
    </lineage>
</organism>
<sequence>MDVDIIDEDENPMLHRTDVRFQLTHEEATPSRLSVRDSLAAKLNKDASEVVVRKLDTKYGMRKTVGHAKVYDSADDAKAVEQDHALERNKIEADEEADEEAAEEA</sequence>
<comment type="similarity">
    <text evidence="1">Belongs to the eukaryotic ribosomal protein eS24 family.</text>
</comment>
<gene>
    <name evidence="1" type="primary">rps24e</name>
    <name type="ordered locus">NP_5074A</name>
</gene>
<evidence type="ECO:0000255" key="1">
    <source>
        <dbReference type="HAMAP-Rule" id="MF_00545"/>
    </source>
</evidence>
<evidence type="ECO:0000256" key="2">
    <source>
        <dbReference type="SAM" id="MobiDB-lite"/>
    </source>
</evidence>
<evidence type="ECO:0000305" key="3"/>
<feature type="chain" id="PRO_1000017748" description="Small ribosomal subunit protein eS24">
    <location>
        <begin position="1"/>
        <end position="105"/>
    </location>
</feature>
<feature type="region of interest" description="Disordered" evidence="2">
    <location>
        <begin position="86"/>
        <end position="105"/>
    </location>
</feature>
<feature type="compositionally biased region" description="Acidic residues" evidence="2">
    <location>
        <begin position="93"/>
        <end position="105"/>
    </location>
</feature>
<dbReference type="EMBL" id="CR936257">
    <property type="protein sequence ID" value="CAI50628.1"/>
    <property type="molecule type" value="Genomic_DNA"/>
</dbReference>
<dbReference type="RefSeq" id="WP_011324238.1">
    <property type="nucleotide sequence ID" value="NC_007426.1"/>
</dbReference>
<dbReference type="SMR" id="Q3IMN0"/>
<dbReference type="STRING" id="348780.NP_5074A"/>
<dbReference type="EnsemblBacteria" id="CAI50628">
    <property type="protein sequence ID" value="CAI50628"/>
    <property type="gene ID" value="NP_5074A"/>
</dbReference>
<dbReference type="GeneID" id="3703176"/>
<dbReference type="KEGG" id="nph:NP_5074A"/>
<dbReference type="eggNOG" id="arCOG04182">
    <property type="taxonomic scope" value="Archaea"/>
</dbReference>
<dbReference type="HOGENOM" id="CLU_107248_3_1_2"/>
<dbReference type="OrthoDB" id="27533at2157"/>
<dbReference type="Proteomes" id="UP000002698">
    <property type="component" value="Chromosome"/>
</dbReference>
<dbReference type="GO" id="GO:1990904">
    <property type="term" value="C:ribonucleoprotein complex"/>
    <property type="evidence" value="ECO:0007669"/>
    <property type="project" value="UniProtKB-KW"/>
</dbReference>
<dbReference type="GO" id="GO:0005840">
    <property type="term" value="C:ribosome"/>
    <property type="evidence" value="ECO:0007669"/>
    <property type="project" value="UniProtKB-KW"/>
</dbReference>
<dbReference type="GO" id="GO:0003735">
    <property type="term" value="F:structural constituent of ribosome"/>
    <property type="evidence" value="ECO:0007669"/>
    <property type="project" value="InterPro"/>
</dbReference>
<dbReference type="GO" id="GO:0006412">
    <property type="term" value="P:translation"/>
    <property type="evidence" value="ECO:0007669"/>
    <property type="project" value="UniProtKB-UniRule"/>
</dbReference>
<dbReference type="Gene3D" id="3.30.70.330">
    <property type="match status" value="1"/>
</dbReference>
<dbReference type="HAMAP" id="MF_00545">
    <property type="entry name" value="Ribosomal_eS24"/>
    <property type="match status" value="1"/>
</dbReference>
<dbReference type="InterPro" id="IPR012677">
    <property type="entry name" value="Nucleotide-bd_a/b_plait_sf"/>
</dbReference>
<dbReference type="InterPro" id="IPR001976">
    <property type="entry name" value="Ribosomal_eS24"/>
</dbReference>
<dbReference type="InterPro" id="IPR012678">
    <property type="entry name" value="Ribosomal_uL23/eL15/eS24_sf"/>
</dbReference>
<dbReference type="PANTHER" id="PTHR10496">
    <property type="entry name" value="40S RIBOSOMAL PROTEIN S24"/>
    <property type="match status" value="1"/>
</dbReference>
<dbReference type="Pfam" id="PF01282">
    <property type="entry name" value="Ribosomal_S24e"/>
    <property type="match status" value="1"/>
</dbReference>
<dbReference type="SUPFAM" id="SSF54189">
    <property type="entry name" value="Ribosomal proteins S24e, L23 and L15e"/>
    <property type="match status" value="1"/>
</dbReference>
<proteinExistence type="inferred from homology"/>
<name>RS24_NATPD</name>
<accession>Q3IMN0</accession>
<protein>
    <recommendedName>
        <fullName evidence="1">Small ribosomal subunit protein eS24</fullName>
    </recommendedName>
    <alternativeName>
        <fullName evidence="3">30S ribosomal protein S24e</fullName>
    </alternativeName>
</protein>